<keyword id="KW-1185">Reference proteome</keyword>
<keyword id="KW-0687">Ribonucleoprotein</keyword>
<keyword id="KW-0689">Ribosomal protein</keyword>
<keyword id="KW-0694">RNA-binding</keyword>
<keyword id="KW-0699">rRNA-binding</keyword>
<dbReference type="EMBL" id="CP001392">
    <property type="protein sequence ID" value="ACM31867.1"/>
    <property type="molecule type" value="Genomic_DNA"/>
</dbReference>
<dbReference type="RefSeq" id="WP_011803853.1">
    <property type="nucleotide sequence ID" value="NC_011992.1"/>
</dbReference>
<dbReference type="SMR" id="B9MBU7"/>
<dbReference type="GeneID" id="84683103"/>
<dbReference type="KEGG" id="dia:Dtpsy_0383"/>
<dbReference type="eggNOG" id="COG0093">
    <property type="taxonomic scope" value="Bacteria"/>
</dbReference>
<dbReference type="HOGENOM" id="CLU_095071_2_1_4"/>
<dbReference type="Proteomes" id="UP000000450">
    <property type="component" value="Chromosome"/>
</dbReference>
<dbReference type="GO" id="GO:0022625">
    <property type="term" value="C:cytosolic large ribosomal subunit"/>
    <property type="evidence" value="ECO:0007669"/>
    <property type="project" value="TreeGrafter"/>
</dbReference>
<dbReference type="GO" id="GO:0070180">
    <property type="term" value="F:large ribosomal subunit rRNA binding"/>
    <property type="evidence" value="ECO:0007669"/>
    <property type="project" value="TreeGrafter"/>
</dbReference>
<dbReference type="GO" id="GO:0003735">
    <property type="term" value="F:structural constituent of ribosome"/>
    <property type="evidence" value="ECO:0007669"/>
    <property type="project" value="InterPro"/>
</dbReference>
<dbReference type="GO" id="GO:0006412">
    <property type="term" value="P:translation"/>
    <property type="evidence" value="ECO:0007669"/>
    <property type="project" value="UniProtKB-UniRule"/>
</dbReference>
<dbReference type="CDD" id="cd00337">
    <property type="entry name" value="Ribosomal_uL14"/>
    <property type="match status" value="1"/>
</dbReference>
<dbReference type="FunFam" id="2.40.150.20:FF:000001">
    <property type="entry name" value="50S ribosomal protein L14"/>
    <property type="match status" value="1"/>
</dbReference>
<dbReference type="Gene3D" id="2.40.150.20">
    <property type="entry name" value="Ribosomal protein L14"/>
    <property type="match status" value="1"/>
</dbReference>
<dbReference type="HAMAP" id="MF_01367">
    <property type="entry name" value="Ribosomal_uL14"/>
    <property type="match status" value="1"/>
</dbReference>
<dbReference type="InterPro" id="IPR000218">
    <property type="entry name" value="Ribosomal_uL14"/>
</dbReference>
<dbReference type="InterPro" id="IPR005745">
    <property type="entry name" value="Ribosomal_uL14_bac-type"/>
</dbReference>
<dbReference type="InterPro" id="IPR019972">
    <property type="entry name" value="Ribosomal_uL14_CS"/>
</dbReference>
<dbReference type="InterPro" id="IPR036853">
    <property type="entry name" value="Ribosomal_uL14_sf"/>
</dbReference>
<dbReference type="NCBIfam" id="TIGR01067">
    <property type="entry name" value="rplN_bact"/>
    <property type="match status" value="1"/>
</dbReference>
<dbReference type="PANTHER" id="PTHR11761">
    <property type="entry name" value="50S/60S RIBOSOMAL PROTEIN L14/L23"/>
    <property type="match status" value="1"/>
</dbReference>
<dbReference type="PANTHER" id="PTHR11761:SF3">
    <property type="entry name" value="LARGE RIBOSOMAL SUBUNIT PROTEIN UL14M"/>
    <property type="match status" value="1"/>
</dbReference>
<dbReference type="Pfam" id="PF00238">
    <property type="entry name" value="Ribosomal_L14"/>
    <property type="match status" value="1"/>
</dbReference>
<dbReference type="SMART" id="SM01374">
    <property type="entry name" value="Ribosomal_L14"/>
    <property type="match status" value="1"/>
</dbReference>
<dbReference type="SUPFAM" id="SSF50193">
    <property type="entry name" value="Ribosomal protein L14"/>
    <property type="match status" value="1"/>
</dbReference>
<dbReference type="PROSITE" id="PS00049">
    <property type="entry name" value="RIBOSOMAL_L14"/>
    <property type="match status" value="1"/>
</dbReference>
<accession>B9MBU7</accession>
<gene>
    <name evidence="1" type="primary">rplN</name>
    <name type="ordered locus">Dtpsy_0383</name>
</gene>
<feature type="chain" id="PRO_1000166918" description="Large ribosomal subunit protein uL14">
    <location>
        <begin position="1"/>
        <end position="122"/>
    </location>
</feature>
<name>RL14_ACIET</name>
<sequence length="122" mass="13182">MIQTESRLDVADNTGAKSVLCIKVLGGSKRRYASVGDIIKVSVKEAAPRGRVKKGEVYSAVVVRTAKGIRRGDGSLVKFDGNAAVLLNSKLEPIGTRIFGPVTRELRTERFMKIVSLAPEVL</sequence>
<reference key="1">
    <citation type="submission" date="2009-01" db="EMBL/GenBank/DDBJ databases">
        <title>Complete sequence of Diaphorobacter sp. TPSY.</title>
        <authorList>
            <consortium name="US DOE Joint Genome Institute"/>
            <person name="Lucas S."/>
            <person name="Copeland A."/>
            <person name="Lapidus A."/>
            <person name="Glavina del Rio T."/>
            <person name="Tice H."/>
            <person name="Bruce D."/>
            <person name="Goodwin L."/>
            <person name="Pitluck S."/>
            <person name="Chertkov O."/>
            <person name="Brettin T."/>
            <person name="Detter J.C."/>
            <person name="Han C."/>
            <person name="Larimer F."/>
            <person name="Land M."/>
            <person name="Hauser L."/>
            <person name="Kyrpides N."/>
            <person name="Mikhailova N."/>
            <person name="Coates J.D."/>
        </authorList>
    </citation>
    <scope>NUCLEOTIDE SEQUENCE [LARGE SCALE GENOMIC DNA]</scope>
    <source>
        <strain>TPSY</strain>
    </source>
</reference>
<comment type="function">
    <text evidence="1">Binds to 23S rRNA. Forms part of two intersubunit bridges in the 70S ribosome.</text>
</comment>
<comment type="subunit">
    <text evidence="1">Part of the 50S ribosomal subunit. Forms a cluster with proteins L3 and L19. In the 70S ribosome, L14 and L19 interact and together make contacts with the 16S rRNA in bridges B5 and B8.</text>
</comment>
<comment type="similarity">
    <text evidence="1">Belongs to the universal ribosomal protein uL14 family.</text>
</comment>
<proteinExistence type="inferred from homology"/>
<evidence type="ECO:0000255" key="1">
    <source>
        <dbReference type="HAMAP-Rule" id="MF_01367"/>
    </source>
</evidence>
<evidence type="ECO:0000305" key="2"/>
<protein>
    <recommendedName>
        <fullName evidence="1">Large ribosomal subunit protein uL14</fullName>
    </recommendedName>
    <alternativeName>
        <fullName evidence="2">50S ribosomal protein L14</fullName>
    </alternativeName>
</protein>
<organism>
    <name type="scientific">Acidovorax ebreus (strain TPSY)</name>
    <name type="common">Diaphorobacter sp. (strain TPSY)</name>
    <dbReference type="NCBI Taxonomy" id="535289"/>
    <lineage>
        <taxon>Bacteria</taxon>
        <taxon>Pseudomonadati</taxon>
        <taxon>Pseudomonadota</taxon>
        <taxon>Betaproteobacteria</taxon>
        <taxon>Burkholderiales</taxon>
        <taxon>Comamonadaceae</taxon>
        <taxon>Diaphorobacter</taxon>
    </lineage>
</organism>